<accession>Q9A4N2</accession>
<keyword id="KW-0285">Flavoprotein</keyword>
<keyword id="KW-0288">FMN</keyword>
<keyword id="KW-0503">Monooxygenase</keyword>
<keyword id="KW-0521">NADP</keyword>
<keyword id="KW-0560">Oxidoreductase</keyword>
<keyword id="KW-1185">Reference proteome</keyword>
<protein>
    <recommendedName>
        <fullName>Pyrimidine monooxygenase RutA</fullName>
        <ecNumber evidence="1">1.14.99.46</ecNumber>
    </recommendedName>
</protein>
<organism>
    <name type="scientific">Caulobacter vibrioides (strain ATCC 19089 / CIP 103742 / CB 15)</name>
    <name type="common">Caulobacter crescentus</name>
    <dbReference type="NCBI Taxonomy" id="190650"/>
    <lineage>
        <taxon>Bacteria</taxon>
        <taxon>Pseudomonadati</taxon>
        <taxon>Pseudomonadota</taxon>
        <taxon>Alphaproteobacteria</taxon>
        <taxon>Caulobacterales</taxon>
        <taxon>Caulobacteraceae</taxon>
        <taxon>Caulobacter</taxon>
    </lineage>
</organism>
<comment type="function">
    <text evidence="1">Catalyzes the pyrimidine ring opening between N-3 and C-4 by an unusual flavin hydroperoxide-catalyzed mechanism, adding oxygen atoms in the process to yield ureidoacrylate peracid, that immediately reacts with FMN forming ureidoacrylate and FMN-N(5)-oxide. The FMN-N(5)-oxide reacts spontaneously with NADH to produce FMN. Requires the flavin reductase RutF to regenerate FMN in vivo.</text>
</comment>
<comment type="catalytic activity">
    <reaction>
        <text>uracil + FMNH2 + NADH + O2 = (Z)-3-ureidoacrylate + FMN + NAD(+) + H2O + H(+)</text>
        <dbReference type="Rhea" id="RHEA:31587"/>
        <dbReference type="ChEBI" id="CHEBI:15377"/>
        <dbReference type="ChEBI" id="CHEBI:15378"/>
        <dbReference type="ChEBI" id="CHEBI:15379"/>
        <dbReference type="ChEBI" id="CHEBI:17568"/>
        <dbReference type="ChEBI" id="CHEBI:57540"/>
        <dbReference type="ChEBI" id="CHEBI:57618"/>
        <dbReference type="ChEBI" id="CHEBI:57945"/>
        <dbReference type="ChEBI" id="CHEBI:58210"/>
        <dbReference type="ChEBI" id="CHEBI:59891"/>
        <dbReference type="EC" id="1.14.99.46"/>
    </reaction>
</comment>
<comment type="catalytic activity">
    <reaction>
        <text>thymine + FMNH2 + NADH + O2 = (Z)-2-methylureidoacrylate + FMN + NAD(+) + H2O + H(+)</text>
        <dbReference type="Rhea" id="RHEA:31599"/>
        <dbReference type="ChEBI" id="CHEBI:15377"/>
        <dbReference type="ChEBI" id="CHEBI:15378"/>
        <dbReference type="ChEBI" id="CHEBI:15379"/>
        <dbReference type="ChEBI" id="CHEBI:17821"/>
        <dbReference type="ChEBI" id="CHEBI:57540"/>
        <dbReference type="ChEBI" id="CHEBI:57618"/>
        <dbReference type="ChEBI" id="CHEBI:57945"/>
        <dbReference type="ChEBI" id="CHEBI:58210"/>
        <dbReference type="ChEBI" id="CHEBI:143783"/>
        <dbReference type="EC" id="1.14.99.46"/>
    </reaction>
</comment>
<comment type="similarity">
    <text evidence="3">Belongs to the NtaA/SnaA/DszA monooxygenase family. RutA subfamily.</text>
</comment>
<reference key="1">
    <citation type="journal article" date="2001" name="Proc. Natl. Acad. Sci. U.S.A.">
        <title>Complete genome sequence of Caulobacter crescentus.</title>
        <authorList>
            <person name="Nierman W.C."/>
            <person name="Feldblyum T.V."/>
            <person name="Laub M.T."/>
            <person name="Paulsen I.T."/>
            <person name="Nelson K.E."/>
            <person name="Eisen J.A."/>
            <person name="Heidelberg J.F."/>
            <person name="Alley M.R.K."/>
            <person name="Ohta N."/>
            <person name="Maddock J.R."/>
            <person name="Potocka I."/>
            <person name="Nelson W.C."/>
            <person name="Newton A."/>
            <person name="Stephens C."/>
            <person name="Phadke N.D."/>
            <person name="Ely B."/>
            <person name="DeBoy R.T."/>
            <person name="Dodson R.J."/>
            <person name="Durkin A.S."/>
            <person name="Gwinn M.L."/>
            <person name="Haft D.H."/>
            <person name="Kolonay J.F."/>
            <person name="Smit J."/>
            <person name="Craven M.B."/>
            <person name="Khouri H.M."/>
            <person name="Shetty J."/>
            <person name="Berry K.J."/>
            <person name="Utterback T.R."/>
            <person name="Tran K."/>
            <person name="Wolf A.M."/>
            <person name="Vamathevan J.J."/>
            <person name="Ermolaeva M.D."/>
            <person name="White O."/>
            <person name="Salzberg S.L."/>
            <person name="Venter J.C."/>
            <person name="Shapiro L."/>
            <person name="Fraser C.M."/>
        </authorList>
    </citation>
    <scope>NUCLEOTIDE SEQUENCE [LARGE SCALE GENOMIC DNA]</scope>
    <source>
        <strain>ATCC 19089 / CIP 103742 / CB 15</strain>
    </source>
</reference>
<evidence type="ECO:0000250" key="1">
    <source>
        <dbReference type="UniProtKB" id="P75898"/>
    </source>
</evidence>
<evidence type="ECO:0000255" key="2"/>
<evidence type="ECO:0000305" key="3"/>
<dbReference type="EC" id="1.14.99.46" evidence="1"/>
<dbReference type="EMBL" id="AE005673">
    <property type="protein sequence ID" value="AAK24762.1"/>
    <property type="molecule type" value="Genomic_DNA"/>
</dbReference>
<dbReference type="PIR" id="F87595">
    <property type="entry name" value="F87595"/>
</dbReference>
<dbReference type="RefSeq" id="NP_421594.1">
    <property type="nucleotide sequence ID" value="NC_002696.2"/>
</dbReference>
<dbReference type="RefSeq" id="WP_010920639.1">
    <property type="nucleotide sequence ID" value="NC_002696.2"/>
</dbReference>
<dbReference type="SMR" id="Q9A4N2"/>
<dbReference type="STRING" id="190650.CC_2798"/>
<dbReference type="EnsemblBacteria" id="AAK24762">
    <property type="protein sequence ID" value="AAK24762"/>
    <property type="gene ID" value="CC_2798"/>
</dbReference>
<dbReference type="KEGG" id="ccr:CC_2798"/>
<dbReference type="PATRIC" id="fig|190650.5.peg.2800"/>
<dbReference type="eggNOG" id="COG2141">
    <property type="taxonomic scope" value="Bacteria"/>
</dbReference>
<dbReference type="HOGENOM" id="CLU_027853_1_1_5"/>
<dbReference type="BioCyc" id="CAULO:CC2798-MONOMER"/>
<dbReference type="Proteomes" id="UP000001816">
    <property type="component" value="Chromosome"/>
</dbReference>
<dbReference type="GO" id="GO:0008726">
    <property type="term" value="F:alkanesulfonate monooxygenase activity"/>
    <property type="evidence" value="ECO:0007669"/>
    <property type="project" value="TreeGrafter"/>
</dbReference>
<dbReference type="GO" id="GO:0004497">
    <property type="term" value="F:monooxygenase activity"/>
    <property type="evidence" value="ECO:0000250"/>
    <property type="project" value="UniProtKB"/>
</dbReference>
<dbReference type="GO" id="GO:0052614">
    <property type="term" value="F:uracil oxygenase activity"/>
    <property type="evidence" value="ECO:0007669"/>
    <property type="project" value="UniProtKB-EC"/>
</dbReference>
<dbReference type="GO" id="GO:0046306">
    <property type="term" value="P:alkanesulfonate catabolic process"/>
    <property type="evidence" value="ECO:0007669"/>
    <property type="project" value="TreeGrafter"/>
</dbReference>
<dbReference type="GO" id="GO:0019740">
    <property type="term" value="P:nitrogen utilization"/>
    <property type="evidence" value="ECO:0007669"/>
    <property type="project" value="UniProtKB-UniRule"/>
</dbReference>
<dbReference type="GO" id="GO:0006212">
    <property type="term" value="P:uracil catabolic process"/>
    <property type="evidence" value="ECO:0007669"/>
    <property type="project" value="UniProtKB-UniRule"/>
</dbReference>
<dbReference type="CDD" id="cd01094">
    <property type="entry name" value="Alkanesulfonate_monoxygenase"/>
    <property type="match status" value="1"/>
</dbReference>
<dbReference type="FunFam" id="3.20.20.30:FF:000003">
    <property type="entry name" value="Pyrimidine monooxygenase RutA"/>
    <property type="match status" value="1"/>
</dbReference>
<dbReference type="Gene3D" id="3.20.20.30">
    <property type="entry name" value="Luciferase-like domain"/>
    <property type="match status" value="1"/>
</dbReference>
<dbReference type="HAMAP" id="MF_01699">
    <property type="entry name" value="RutA"/>
    <property type="match status" value="1"/>
</dbReference>
<dbReference type="InterPro" id="IPR011251">
    <property type="entry name" value="Luciferase-like_dom"/>
</dbReference>
<dbReference type="InterPro" id="IPR036661">
    <property type="entry name" value="Luciferase-like_sf"/>
</dbReference>
<dbReference type="InterPro" id="IPR019914">
    <property type="entry name" value="Pyrimidine_monooxygenase_RutA"/>
</dbReference>
<dbReference type="InterPro" id="IPR050172">
    <property type="entry name" value="SsuD_RutA_monooxygenase"/>
</dbReference>
<dbReference type="NCBIfam" id="TIGR03612">
    <property type="entry name" value="RutA"/>
    <property type="match status" value="1"/>
</dbReference>
<dbReference type="PANTHER" id="PTHR42847">
    <property type="entry name" value="ALKANESULFONATE MONOOXYGENASE"/>
    <property type="match status" value="1"/>
</dbReference>
<dbReference type="PANTHER" id="PTHR42847:SF4">
    <property type="entry name" value="ALKANESULFONATE MONOOXYGENASE-RELATED"/>
    <property type="match status" value="1"/>
</dbReference>
<dbReference type="Pfam" id="PF00296">
    <property type="entry name" value="Bac_luciferase"/>
    <property type="match status" value="1"/>
</dbReference>
<dbReference type="SUPFAM" id="SSF51679">
    <property type="entry name" value="Bacterial luciferase-like"/>
    <property type="match status" value="1"/>
</dbReference>
<name>RUTA_CAUVC</name>
<sequence>MQVGVFIPIGNNGWLISETSPQYMPSFELNKEITQKAEKYGFDFALSMIKLRGFGGKTEFWEHNLESFTLMAGLAAVTSKIKIFATVATLTIPPAIVARMASTIDSIAPGRFGVNLVTGWQKAEYSQMGLWPGEAHYTDRYNYLAEYTTVLKDLLETGVSDFKGKYFTMDDCRVSPHPKETKLICAGSSDEGLAFTAQYADYSFALGKGTNTPTAFASVNRRLEAAAAKTGRDVQSFILFMVIADETDEKAMAKWQKYRDGADQEALAWLTQQAAPNAKAGATTNTQQLAAPESAVNLNMGTLVGSYESIARMMDEIAQVPGTAGVLLTFDDFVQGVEDFGTKIQPLMKSRKGG</sequence>
<gene>
    <name type="primary">rutA</name>
    <name type="ordered locus">CC_2798</name>
</gene>
<proteinExistence type="inferred from homology"/>
<feature type="chain" id="PRO_0000197431" description="Pyrimidine monooxygenase RutA">
    <location>
        <begin position="1"/>
        <end position="354"/>
    </location>
</feature>
<feature type="binding site" evidence="2">
    <location>
        <begin position="49"/>
        <end position="50"/>
    </location>
    <ligand>
        <name>FMN</name>
        <dbReference type="ChEBI" id="CHEBI:58210"/>
    </ligand>
</feature>
<feature type="binding site" evidence="2">
    <location>
        <position position="115"/>
    </location>
    <ligand>
        <name>FMN</name>
        <dbReference type="ChEBI" id="CHEBI:58210"/>
    </ligand>
</feature>
<feature type="binding site" evidence="2">
    <location>
        <position position="124"/>
    </location>
    <ligand>
        <name>FMN</name>
        <dbReference type="ChEBI" id="CHEBI:58210"/>
    </ligand>
</feature>
<feature type="binding site" evidence="2">
    <location>
        <begin position="140"/>
        <end position="141"/>
    </location>
    <ligand>
        <name>FMN</name>
        <dbReference type="ChEBI" id="CHEBI:58210"/>
    </ligand>
</feature>
<feature type="binding site" evidence="2">
    <location>
        <position position="189"/>
    </location>
    <ligand>
        <name>FMN</name>
        <dbReference type="ChEBI" id="CHEBI:58210"/>
    </ligand>
</feature>